<proteinExistence type="evidence at protein level"/>
<comment type="function">
    <text evidence="3">Determines thylakoid architecture by inducing membrane curvature.</text>
</comment>
<comment type="subunit">
    <text evidence="3">Homo- and heterodimers and trimers.</text>
</comment>
<comment type="subcellular location">
    <subcellularLocation>
        <location evidence="2">Plastid</location>
        <location evidence="2">Chloroplast</location>
        <location evidence="2">Plastoglobule</location>
    </subcellularLocation>
    <subcellularLocation>
        <location evidence="4">Membrane</location>
        <topology evidence="4">Multi-pass membrane protein</topology>
    </subcellularLocation>
    <subcellularLocation>
        <location>Plastid</location>
        <location>Chloroplast thylakoid membrane</location>
        <topology>Multi-pass membrane protein</topology>
    </subcellularLocation>
    <text evidence="3">Located almost exclusively at grana margins.</text>
</comment>
<comment type="alternative products">
    <event type="alternative splicing"/>
    <isoform>
        <id>O04616-1</id>
        <name>1</name>
        <sequence type="displayed"/>
    </isoform>
    <text>A number of isoforms are produced. According to EST sequences.</text>
</comment>
<comment type="disruption phenotype">
    <text evidence="3">No effect on growth behavior, leaf coloration, grana stacks or photochemical efficiency of photosystem II. Curt1a, curt1b, curt1c and curt1d quadruple mutant shows disorganized thylakoids with extended stretches of unstacked membranes and broader stacks made up of fewer layers.</text>
</comment>
<comment type="similarity">
    <text evidence="4">Belongs to the CURT family.</text>
</comment>
<gene>
    <name type="primary">CURT1A</name>
    <name type="ordered locus">At4g01150</name>
    <name type="ORF">A_IG002N01.18</name>
    <name type="ORF">F2N1.18</name>
</gene>
<sequence>MAISVAASSSMAVMVPRVPAVSTRCSAVPYLPPRSFGRSSFTVPLKLVSGNGLQKVELLKTRASSEETSSIDTNELITDLKEKWDGLENKSTVLIYGGGAIVAVWLSSIVVGAINSVPLLPKVMELVGLGYTGWFVYRYLLFKSSRKELAEDIESLKKKIAGSE</sequence>
<reference key="1">
    <citation type="journal article" date="1996" name="Planta">
        <title>The 5' untranslated region of Arabidopsis thaliana calmodulin cDNA is an independent cDNA containing an open reading frame.</title>
        <authorList>
            <person name="Granot D."/>
            <person name="Dai N."/>
        </authorList>
    </citation>
    <scope>NUCLEOTIDE SEQUENCE [MRNA]</scope>
    <source>
        <strain>cv. Landsberg erecta</strain>
    </source>
</reference>
<reference key="2">
    <citation type="journal article" date="1999" name="Nature">
        <title>Sequence and analysis of chromosome 4 of the plant Arabidopsis thaliana.</title>
        <authorList>
            <person name="Mayer K.F.X."/>
            <person name="Schueller C."/>
            <person name="Wambutt R."/>
            <person name="Murphy G."/>
            <person name="Volckaert G."/>
            <person name="Pohl T."/>
            <person name="Duesterhoeft A."/>
            <person name="Stiekema W."/>
            <person name="Entian K.-D."/>
            <person name="Terryn N."/>
            <person name="Harris B."/>
            <person name="Ansorge W."/>
            <person name="Brandt P."/>
            <person name="Grivell L.A."/>
            <person name="Rieger M."/>
            <person name="Weichselgartner M."/>
            <person name="de Simone V."/>
            <person name="Obermaier B."/>
            <person name="Mache R."/>
            <person name="Mueller M."/>
            <person name="Kreis M."/>
            <person name="Delseny M."/>
            <person name="Puigdomenech P."/>
            <person name="Watson M."/>
            <person name="Schmidtheini T."/>
            <person name="Reichert B."/>
            <person name="Portetelle D."/>
            <person name="Perez-Alonso M."/>
            <person name="Boutry M."/>
            <person name="Bancroft I."/>
            <person name="Vos P."/>
            <person name="Hoheisel J."/>
            <person name="Zimmermann W."/>
            <person name="Wedler H."/>
            <person name="Ridley P."/>
            <person name="Langham S.-A."/>
            <person name="McCullagh B."/>
            <person name="Bilham L."/>
            <person name="Robben J."/>
            <person name="van der Schueren J."/>
            <person name="Grymonprez B."/>
            <person name="Chuang Y.-J."/>
            <person name="Vandenbussche F."/>
            <person name="Braeken M."/>
            <person name="Weltjens I."/>
            <person name="Voet M."/>
            <person name="Bastiaens I."/>
            <person name="Aert R."/>
            <person name="Defoor E."/>
            <person name="Weitzenegger T."/>
            <person name="Bothe G."/>
            <person name="Ramsperger U."/>
            <person name="Hilbert H."/>
            <person name="Braun M."/>
            <person name="Holzer E."/>
            <person name="Brandt A."/>
            <person name="Peters S."/>
            <person name="van Staveren M."/>
            <person name="Dirkse W."/>
            <person name="Mooijman P."/>
            <person name="Klein Lankhorst R."/>
            <person name="Rose M."/>
            <person name="Hauf J."/>
            <person name="Koetter P."/>
            <person name="Berneiser S."/>
            <person name="Hempel S."/>
            <person name="Feldpausch M."/>
            <person name="Lamberth S."/>
            <person name="Van den Daele H."/>
            <person name="De Keyser A."/>
            <person name="Buysshaert C."/>
            <person name="Gielen J."/>
            <person name="Villarroel R."/>
            <person name="De Clercq R."/>
            <person name="van Montagu M."/>
            <person name="Rogers J."/>
            <person name="Cronin A."/>
            <person name="Quail M.A."/>
            <person name="Bray-Allen S."/>
            <person name="Clark L."/>
            <person name="Doggett J."/>
            <person name="Hall S."/>
            <person name="Kay M."/>
            <person name="Lennard N."/>
            <person name="McLay K."/>
            <person name="Mayes R."/>
            <person name="Pettett A."/>
            <person name="Rajandream M.A."/>
            <person name="Lyne M."/>
            <person name="Benes V."/>
            <person name="Rechmann S."/>
            <person name="Borkova D."/>
            <person name="Bloecker H."/>
            <person name="Scharfe M."/>
            <person name="Grimm M."/>
            <person name="Loehnert T.-H."/>
            <person name="Dose S."/>
            <person name="de Haan M."/>
            <person name="Maarse A.C."/>
            <person name="Schaefer M."/>
            <person name="Mueller-Auer S."/>
            <person name="Gabel C."/>
            <person name="Fuchs M."/>
            <person name="Fartmann B."/>
            <person name="Granderath K."/>
            <person name="Dauner D."/>
            <person name="Herzl A."/>
            <person name="Neumann S."/>
            <person name="Argiriou A."/>
            <person name="Vitale D."/>
            <person name="Liguori R."/>
            <person name="Piravandi E."/>
            <person name="Massenet O."/>
            <person name="Quigley F."/>
            <person name="Clabauld G."/>
            <person name="Muendlein A."/>
            <person name="Felber R."/>
            <person name="Schnabl S."/>
            <person name="Hiller R."/>
            <person name="Schmidt W."/>
            <person name="Lecharny A."/>
            <person name="Aubourg S."/>
            <person name="Chefdor F."/>
            <person name="Cooke R."/>
            <person name="Berger C."/>
            <person name="Monfort A."/>
            <person name="Casacuberta E."/>
            <person name="Gibbons T."/>
            <person name="Weber N."/>
            <person name="Vandenbol M."/>
            <person name="Bargues M."/>
            <person name="Terol J."/>
            <person name="Torres A."/>
            <person name="Perez-Perez A."/>
            <person name="Purnelle B."/>
            <person name="Bent E."/>
            <person name="Johnson S."/>
            <person name="Tacon D."/>
            <person name="Jesse T."/>
            <person name="Heijnen L."/>
            <person name="Schwarz S."/>
            <person name="Scholler P."/>
            <person name="Heber S."/>
            <person name="Francs P."/>
            <person name="Bielke C."/>
            <person name="Frishman D."/>
            <person name="Haase D."/>
            <person name="Lemcke K."/>
            <person name="Mewes H.-W."/>
            <person name="Stocker S."/>
            <person name="Zaccaria P."/>
            <person name="Bevan M."/>
            <person name="Wilson R.K."/>
            <person name="de la Bastide M."/>
            <person name="Habermann K."/>
            <person name="Parnell L."/>
            <person name="Dedhia N."/>
            <person name="Gnoj L."/>
            <person name="Schutz K."/>
            <person name="Huang E."/>
            <person name="Spiegel L."/>
            <person name="Sekhon M."/>
            <person name="Murray J."/>
            <person name="Sheet P."/>
            <person name="Cordes M."/>
            <person name="Abu-Threideh J."/>
            <person name="Stoneking T."/>
            <person name="Kalicki J."/>
            <person name="Graves T."/>
            <person name="Harmon G."/>
            <person name="Edwards J."/>
            <person name="Latreille P."/>
            <person name="Courtney L."/>
            <person name="Cloud J."/>
            <person name="Abbott A."/>
            <person name="Scott K."/>
            <person name="Johnson D."/>
            <person name="Minx P."/>
            <person name="Bentley D."/>
            <person name="Fulton B."/>
            <person name="Miller N."/>
            <person name="Greco T."/>
            <person name="Kemp K."/>
            <person name="Kramer J."/>
            <person name="Fulton L."/>
            <person name="Mardis E."/>
            <person name="Dante M."/>
            <person name="Pepin K."/>
            <person name="Hillier L.W."/>
            <person name="Nelson J."/>
            <person name="Spieth J."/>
            <person name="Ryan E."/>
            <person name="Andrews S."/>
            <person name="Geisel C."/>
            <person name="Layman D."/>
            <person name="Du H."/>
            <person name="Ali J."/>
            <person name="Berghoff A."/>
            <person name="Jones K."/>
            <person name="Drone K."/>
            <person name="Cotton M."/>
            <person name="Joshu C."/>
            <person name="Antonoiu B."/>
            <person name="Zidanic M."/>
            <person name="Strong C."/>
            <person name="Sun H."/>
            <person name="Lamar B."/>
            <person name="Yordan C."/>
            <person name="Ma P."/>
            <person name="Zhong J."/>
            <person name="Preston R."/>
            <person name="Vil D."/>
            <person name="Shekher M."/>
            <person name="Matero A."/>
            <person name="Shah R."/>
            <person name="Swaby I.K."/>
            <person name="O'Shaughnessy A."/>
            <person name="Rodriguez M."/>
            <person name="Hoffman J."/>
            <person name="Till S."/>
            <person name="Granat S."/>
            <person name="Shohdy N."/>
            <person name="Hasegawa A."/>
            <person name="Hameed A."/>
            <person name="Lodhi M."/>
            <person name="Johnson A."/>
            <person name="Chen E."/>
            <person name="Marra M.A."/>
            <person name="Martienssen R."/>
            <person name="McCombie W.R."/>
        </authorList>
    </citation>
    <scope>NUCLEOTIDE SEQUENCE [LARGE SCALE GENOMIC DNA]</scope>
    <source>
        <strain>cv. Columbia</strain>
    </source>
</reference>
<reference key="3">
    <citation type="journal article" date="2017" name="Plant J.">
        <title>Araport11: a complete reannotation of the Arabidopsis thaliana reference genome.</title>
        <authorList>
            <person name="Cheng C.Y."/>
            <person name="Krishnakumar V."/>
            <person name="Chan A.P."/>
            <person name="Thibaud-Nissen F."/>
            <person name="Schobel S."/>
            <person name="Town C.D."/>
        </authorList>
    </citation>
    <scope>GENOME REANNOTATION</scope>
    <source>
        <strain>cv. Columbia</strain>
    </source>
</reference>
<reference key="4">
    <citation type="journal article" date="2003" name="Science">
        <title>Empirical analysis of transcriptional activity in the Arabidopsis genome.</title>
        <authorList>
            <person name="Yamada K."/>
            <person name="Lim J."/>
            <person name="Dale J.M."/>
            <person name="Chen H."/>
            <person name="Shinn P."/>
            <person name="Palm C.J."/>
            <person name="Southwick A.M."/>
            <person name="Wu H.C."/>
            <person name="Kim C.J."/>
            <person name="Nguyen M."/>
            <person name="Pham P.K."/>
            <person name="Cheuk R.F."/>
            <person name="Karlin-Newmann G."/>
            <person name="Liu S.X."/>
            <person name="Lam B."/>
            <person name="Sakano H."/>
            <person name="Wu T."/>
            <person name="Yu G."/>
            <person name="Miranda M."/>
            <person name="Quach H.L."/>
            <person name="Tripp M."/>
            <person name="Chang C.H."/>
            <person name="Lee J.M."/>
            <person name="Toriumi M.J."/>
            <person name="Chan M.M."/>
            <person name="Tang C.C."/>
            <person name="Onodera C.S."/>
            <person name="Deng J.M."/>
            <person name="Akiyama K."/>
            <person name="Ansari Y."/>
            <person name="Arakawa T."/>
            <person name="Banh J."/>
            <person name="Banno F."/>
            <person name="Bowser L."/>
            <person name="Brooks S.Y."/>
            <person name="Carninci P."/>
            <person name="Chao Q."/>
            <person name="Choy N."/>
            <person name="Enju A."/>
            <person name="Goldsmith A.D."/>
            <person name="Gurjal M."/>
            <person name="Hansen N.F."/>
            <person name="Hayashizaki Y."/>
            <person name="Johnson-Hopson C."/>
            <person name="Hsuan V.W."/>
            <person name="Iida K."/>
            <person name="Karnes M."/>
            <person name="Khan S."/>
            <person name="Koesema E."/>
            <person name="Ishida J."/>
            <person name="Jiang P.X."/>
            <person name="Jones T."/>
            <person name="Kawai J."/>
            <person name="Kamiya A."/>
            <person name="Meyers C."/>
            <person name="Nakajima M."/>
            <person name="Narusaka M."/>
            <person name="Seki M."/>
            <person name="Sakurai T."/>
            <person name="Satou M."/>
            <person name="Tamse R."/>
            <person name="Vaysberg M."/>
            <person name="Wallender E.K."/>
            <person name="Wong C."/>
            <person name="Yamamura Y."/>
            <person name="Yuan S."/>
            <person name="Shinozaki K."/>
            <person name="Davis R.W."/>
            <person name="Theologis A."/>
            <person name="Ecker J.R."/>
        </authorList>
    </citation>
    <scope>NUCLEOTIDE SEQUENCE [LARGE SCALE MRNA]</scope>
    <source>
        <strain>cv. Columbia</strain>
    </source>
</reference>
<reference key="5">
    <citation type="journal article" date="2006" name="Plant Physiol.">
        <title>Protein profiling of plastoglobules in chloroplasts and chromoplasts. A surprising site for differential accumulation of metabolic enzymes.</title>
        <authorList>
            <person name="Ytterberg A.J."/>
            <person name="Peltier J.-B."/>
            <person name="van Wijk K.J."/>
        </authorList>
    </citation>
    <scope>IDENTIFICATION BY MASS SPECTROMETRY</scope>
    <scope>SUBCELLULAR LOCATION [LARGE SCALE ANALYSIS]</scope>
    <source>
        <strain>cv. Columbia</strain>
    </source>
</reference>
<reference key="6">
    <citation type="journal article" date="2009" name="J. Proteomics">
        <title>Phosphoproteomic analysis of nuclei-enriched fractions from Arabidopsis thaliana.</title>
        <authorList>
            <person name="Jones A.M.E."/>
            <person name="MacLean D."/>
            <person name="Studholme D.J."/>
            <person name="Serna-Sanz A."/>
            <person name="Andreasson E."/>
            <person name="Rathjen J.P."/>
            <person name="Peck S.C."/>
        </authorList>
    </citation>
    <scope>IDENTIFICATION BY MASS SPECTROMETRY [LARGE SCALE ANALYSIS]</scope>
    <source>
        <strain>cv. Columbia</strain>
    </source>
</reference>
<reference key="7">
    <citation type="journal article" date="2009" name="Plant Physiol.">
        <title>Large-scale Arabidopsis phosphoproteome profiling reveals novel chloroplast kinase substrates and phosphorylation networks.</title>
        <authorList>
            <person name="Reiland S."/>
            <person name="Messerli G."/>
            <person name="Baerenfaller K."/>
            <person name="Gerrits B."/>
            <person name="Endler A."/>
            <person name="Grossmann J."/>
            <person name="Gruissem W."/>
            <person name="Baginsky S."/>
        </authorList>
    </citation>
    <scope>IDENTIFICATION BY MASS SPECTROMETRY [LARGE SCALE ANALYSIS]</scope>
</reference>
<reference key="8">
    <citation type="journal article" date="2012" name="Mol. Cell. Proteomics">
        <title>Comparative large-scale characterisation of plant vs. mammal proteins reveals similar and idiosyncratic N-alpha acetylation features.</title>
        <authorList>
            <person name="Bienvenut W.V."/>
            <person name="Sumpton D."/>
            <person name="Martinez A."/>
            <person name="Lilla S."/>
            <person name="Espagne C."/>
            <person name="Meinnel T."/>
            <person name="Giglione C."/>
        </authorList>
    </citation>
    <scope>ACETYLATION [LARGE SCALE ANALYSIS] AT ALA-63</scope>
    <scope>CLEAVAGE OF TRANSIT PEPTIDE [LARGE SCALE ANALYSIS] AFTER ARG-62</scope>
    <scope>IDENTIFICATION BY MASS SPECTROMETRY [LARGE SCALE ANALYSIS]</scope>
</reference>
<reference key="9">
    <citation type="journal article" date="2013" name="Plant Cell">
        <title>Arabidopsis CURVATURE THYLAKOID1 proteins modify thylakoid architecture by inducing membrane curvature.</title>
        <authorList>
            <person name="Armbruster U."/>
            <person name="Labs M."/>
            <person name="Pribil M."/>
            <person name="Viola S."/>
            <person name="Xu W."/>
            <person name="Scharfenberg M."/>
            <person name="Hertle A.P."/>
            <person name="Rojahn U."/>
            <person name="Jensen P.E."/>
            <person name="Rappaport F."/>
            <person name="Joliot P."/>
            <person name="Doermann P."/>
            <person name="Wanner G."/>
            <person name="Leister D."/>
        </authorList>
    </citation>
    <scope>FUNCTION</scope>
    <scope>TOPOLOGY</scope>
    <scope>SUBCELLULAR LOCATION</scope>
    <scope>SUBUNIT</scope>
    <scope>NOMENCLATURE</scope>
    <scope>DISRUPTION PHENOTYPE</scope>
</reference>
<dbReference type="EMBL" id="U19925">
    <property type="protein sequence ID" value="AAB00107.1"/>
    <property type="molecule type" value="mRNA"/>
</dbReference>
<dbReference type="EMBL" id="AF007269">
    <property type="protein sequence ID" value="AAB61025.1"/>
    <property type="molecule type" value="Genomic_DNA"/>
</dbReference>
<dbReference type="EMBL" id="AL161491">
    <property type="protein sequence ID" value="CAB80924.1"/>
    <property type="molecule type" value="Genomic_DNA"/>
</dbReference>
<dbReference type="EMBL" id="CP002687">
    <property type="protein sequence ID" value="AEE81987.1"/>
    <property type="molecule type" value="Genomic_DNA"/>
</dbReference>
<dbReference type="EMBL" id="AY091679">
    <property type="protein sequence ID" value="AAM10278.1"/>
    <property type="molecule type" value="mRNA"/>
</dbReference>
<dbReference type="EMBL" id="AF389292">
    <property type="protein sequence ID" value="AAK63864.1"/>
    <property type="molecule type" value="mRNA"/>
</dbReference>
<dbReference type="PIR" id="T01726">
    <property type="entry name" value="T01726"/>
</dbReference>
<dbReference type="RefSeq" id="NP_567210.1">
    <molecule id="O04616-1"/>
    <property type="nucleotide sequence ID" value="NM_116345.4"/>
</dbReference>
<dbReference type="BioGRID" id="13470">
    <property type="interactions" value="2"/>
</dbReference>
<dbReference type="FunCoup" id="O04616">
    <property type="interactions" value="1509"/>
</dbReference>
<dbReference type="IntAct" id="O04616">
    <property type="interactions" value="4"/>
</dbReference>
<dbReference type="MINT" id="O04616"/>
<dbReference type="STRING" id="3702.O04616"/>
<dbReference type="TCDB" id="8.A.155.1.1">
    <property type="family name" value="the curt protein (curtp) family"/>
</dbReference>
<dbReference type="iPTMnet" id="O04616"/>
<dbReference type="PaxDb" id="3702-AT4G01150.1"/>
<dbReference type="ProteomicsDB" id="220507">
    <molecule id="O04616-1"/>
</dbReference>
<dbReference type="EnsemblPlants" id="AT4G01150.1">
    <molecule id="O04616-1"/>
    <property type="protein sequence ID" value="AT4G01150.1"/>
    <property type="gene ID" value="AT4G01150"/>
</dbReference>
<dbReference type="GeneID" id="828181"/>
<dbReference type="Gramene" id="AT4G01150.1">
    <molecule id="O04616-1"/>
    <property type="protein sequence ID" value="AT4G01150.1"/>
    <property type="gene ID" value="AT4G01150"/>
</dbReference>
<dbReference type="KEGG" id="ath:AT4G01150"/>
<dbReference type="Araport" id="AT4G01150"/>
<dbReference type="TAIR" id="AT4G01150">
    <property type="gene designation" value="CURT1A"/>
</dbReference>
<dbReference type="eggNOG" id="ENOG502S1VH">
    <property type="taxonomic scope" value="Eukaryota"/>
</dbReference>
<dbReference type="HOGENOM" id="CLU_095488_1_0_1"/>
<dbReference type="InParanoid" id="O04616"/>
<dbReference type="OMA" id="QWDAVEN"/>
<dbReference type="OrthoDB" id="2014299at2759"/>
<dbReference type="PhylomeDB" id="O04616"/>
<dbReference type="CD-CODE" id="4299E36E">
    <property type="entry name" value="Nucleolus"/>
</dbReference>
<dbReference type="PRO" id="PR:O04616"/>
<dbReference type="Proteomes" id="UP000006548">
    <property type="component" value="Chromosome 4"/>
</dbReference>
<dbReference type="ExpressionAtlas" id="O04616">
    <property type="expression patterns" value="baseline and differential"/>
</dbReference>
<dbReference type="GO" id="GO:0009507">
    <property type="term" value="C:chloroplast"/>
    <property type="evidence" value="ECO:0007005"/>
    <property type="project" value="TAIR"/>
</dbReference>
<dbReference type="GO" id="GO:0009941">
    <property type="term" value="C:chloroplast envelope"/>
    <property type="evidence" value="ECO:0007005"/>
    <property type="project" value="TAIR"/>
</dbReference>
<dbReference type="GO" id="GO:0009534">
    <property type="term" value="C:chloroplast thylakoid"/>
    <property type="evidence" value="ECO:0007005"/>
    <property type="project" value="TAIR"/>
</dbReference>
<dbReference type="GO" id="GO:0009535">
    <property type="term" value="C:chloroplast thylakoid membrane"/>
    <property type="evidence" value="ECO:0007005"/>
    <property type="project" value="TAIR"/>
</dbReference>
<dbReference type="GO" id="GO:0005829">
    <property type="term" value="C:cytosol"/>
    <property type="evidence" value="ECO:0007005"/>
    <property type="project" value="TAIR"/>
</dbReference>
<dbReference type="GO" id="GO:0009515">
    <property type="term" value="C:granal stacked thylakoid"/>
    <property type="evidence" value="ECO:0000314"/>
    <property type="project" value="TAIR"/>
</dbReference>
<dbReference type="GO" id="GO:0010287">
    <property type="term" value="C:plastoglobule"/>
    <property type="evidence" value="ECO:0007005"/>
    <property type="project" value="TAIR"/>
</dbReference>
<dbReference type="GO" id="GO:0009579">
    <property type="term" value="C:thylakoid"/>
    <property type="evidence" value="ECO:0007005"/>
    <property type="project" value="TAIR"/>
</dbReference>
<dbReference type="GO" id="GO:0090391">
    <property type="term" value="P:granum assembly"/>
    <property type="evidence" value="ECO:0000315"/>
    <property type="project" value="TAIR"/>
</dbReference>
<dbReference type="GO" id="GO:0097753">
    <property type="term" value="P:membrane bending"/>
    <property type="evidence" value="ECO:0000314"/>
    <property type="project" value="TAIR"/>
</dbReference>
<dbReference type="InterPro" id="IPR025564">
    <property type="entry name" value="CAAD_dom"/>
</dbReference>
<dbReference type="InterPro" id="IPR033344">
    <property type="entry name" value="CURT1"/>
</dbReference>
<dbReference type="PANTHER" id="PTHR33222">
    <property type="match status" value="1"/>
</dbReference>
<dbReference type="PANTHER" id="PTHR33222:SF4">
    <property type="entry name" value="PROTEIN CURVATURE THYLAKOID 1A, CHLOROPLASTIC"/>
    <property type="match status" value="1"/>
</dbReference>
<dbReference type="Pfam" id="PF14159">
    <property type="entry name" value="CAAD"/>
    <property type="match status" value="1"/>
</dbReference>
<name>CUT1A_ARATH</name>
<keyword id="KW-0007">Acetylation</keyword>
<keyword id="KW-0025">Alternative splicing</keyword>
<keyword id="KW-0150">Chloroplast</keyword>
<keyword id="KW-0175">Coiled coil</keyword>
<keyword id="KW-0472">Membrane</keyword>
<keyword id="KW-0934">Plastid</keyword>
<keyword id="KW-1185">Reference proteome</keyword>
<keyword id="KW-0793">Thylakoid</keyword>
<keyword id="KW-0809">Transit peptide</keyword>
<keyword id="KW-0812">Transmembrane</keyword>
<keyword id="KW-1133">Transmembrane helix</keyword>
<accession>O04616</accession>
<accession>Q38835</accession>
<feature type="transit peptide" description="Chloroplast" evidence="1 5">
    <location>
        <begin position="1"/>
        <end position="62"/>
    </location>
</feature>
<feature type="chain" id="PRO_0000286547" description="Protein CURVATURE THYLAKOID 1A, chloroplastic">
    <location>
        <begin position="63"/>
        <end position="164"/>
    </location>
</feature>
<feature type="topological domain" description="Stromal" evidence="3">
    <location>
        <begin position="63"/>
        <end position="93"/>
    </location>
</feature>
<feature type="transmembrane region" description="Helical" evidence="1">
    <location>
        <begin position="94"/>
        <end position="114"/>
    </location>
</feature>
<feature type="topological domain" description="Lumenal" evidence="3">
    <location>
        <begin position="115"/>
        <end position="116"/>
    </location>
</feature>
<feature type="transmembrane region" description="Helical" evidence="1">
    <location>
        <begin position="117"/>
        <end position="137"/>
    </location>
</feature>
<feature type="topological domain" description="Stromal" evidence="3">
    <location>
        <begin position="138"/>
        <end position="164"/>
    </location>
</feature>
<feature type="coiled-coil region" evidence="1">
    <location>
        <begin position="140"/>
        <end position="164"/>
    </location>
</feature>
<feature type="modified residue" description="N-acetylalanine" evidence="5">
    <location>
        <position position="63"/>
    </location>
</feature>
<feature type="sequence conflict" description="In Ref. 1; AAB00107." evidence="4" ref="1">
    <original>L</original>
    <variation>V</variation>
    <location>
        <position position="106"/>
    </location>
</feature>
<evidence type="ECO:0000255" key="1"/>
<evidence type="ECO:0000269" key="2">
    <source>
    </source>
</evidence>
<evidence type="ECO:0000269" key="3">
    <source>
    </source>
</evidence>
<evidence type="ECO:0000305" key="4"/>
<evidence type="ECO:0007744" key="5">
    <source>
    </source>
</evidence>
<organism>
    <name type="scientific">Arabidopsis thaliana</name>
    <name type="common">Mouse-ear cress</name>
    <dbReference type="NCBI Taxonomy" id="3702"/>
    <lineage>
        <taxon>Eukaryota</taxon>
        <taxon>Viridiplantae</taxon>
        <taxon>Streptophyta</taxon>
        <taxon>Embryophyta</taxon>
        <taxon>Tracheophyta</taxon>
        <taxon>Spermatophyta</taxon>
        <taxon>Magnoliopsida</taxon>
        <taxon>eudicotyledons</taxon>
        <taxon>Gunneridae</taxon>
        <taxon>Pentapetalae</taxon>
        <taxon>rosids</taxon>
        <taxon>malvids</taxon>
        <taxon>Brassicales</taxon>
        <taxon>Brassicaceae</taxon>
        <taxon>Camelineae</taxon>
        <taxon>Arabidopsis</taxon>
    </lineage>
</organism>
<protein>
    <recommendedName>
        <fullName>Protein CURVATURE THYLAKOID 1A, chloroplastic</fullName>
    </recommendedName>
</protein>